<proteinExistence type="inferred from homology"/>
<accession>O31574</accession>
<name>YFHF_BACSU</name>
<keyword id="KW-1185">Reference proteome</keyword>
<sequence>MNIAMTGGTGFLGQHLTGVLTRQGHHVYILSRNARETEQKNMTYVQWLSEGAAPEQELPHIDVWINLAGKSIFGRWTEKTKQHILSSRINATREVQRLIQKQKEKPKTLIQASAVGIYGTSLEKTFTEDSATSDEDFLSHTAHLWEKEGQHIEAMGIRTVYARFGVMLGEKGALPLMILPYKFLAGGTIGTGRQWLSWIHVEDAAQMIRYAVENAGISGPMNVTAPNPVDMKQFGKTIARVKHRPHWLPVPEFFLSKALGEMSLLIVKGQRALPKKAITSGFRFTYSDLEFALSQLIADRKTV</sequence>
<reference key="1">
    <citation type="journal article" date="1996" name="DNA Res.">
        <title>Cloning and sequencing of a 27.8-kb nucleotide sequence of the 79 degrees-81 degrees region of the Bacillus subtilis genome containing the sspE locus.</title>
        <authorList>
            <person name="Yamamoto H."/>
            <person name="Uchiyama S."/>
            <person name="Sekiguchi J."/>
        </authorList>
    </citation>
    <scope>NUCLEOTIDE SEQUENCE [GENOMIC DNA]</scope>
</reference>
<reference key="2">
    <citation type="journal article" date="1997" name="Nature">
        <title>The complete genome sequence of the Gram-positive bacterium Bacillus subtilis.</title>
        <authorList>
            <person name="Kunst F."/>
            <person name="Ogasawara N."/>
            <person name="Moszer I."/>
            <person name="Albertini A.M."/>
            <person name="Alloni G."/>
            <person name="Azevedo V."/>
            <person name="Bertero M.G."/>
            <person name="Bessieres P."/>
            <person name="Bolotin A."/>
            <person name="Borchert S."/>
            <person name="Borriss R."/>
            <person name="Boursier L."/>
            <person name="Brans A."/>
            <person name="Braun M."/>
            <person name="Brignell S.C."/>
            <person name="Bron S."/>
            <person name="Brouillet S."/>
            <person name="Bruschi C.V."/>
            <person name="Caldwell B."/>
            <person name="Capuano V."/>
            <person name="Carter N.M."/>
            <person name="Choi S.-K."/>
            <person name="Codani J.-J."/>
            <person name="Connerton I.F."/>
            <person name="Cummings N.J."/>
            <person name="Daniel R.A."/>
            <person name="Denizot F."/>
            <person name="Devine K.M."/>
            <person name="Duesterhoeft A."/>
            <person name="Ehrlich S.D."/>
            <person name="Emmerson P.T."/>
            <person name="Entian K.-D."/>
            <person name="Errington J."/>
            <person name="Fabret C."/>
            <person name="Ferrari E."/>
            <person name="Foulger D."/>
            <person name="Fritz C."/>
            <person name="Fujita M."/>
            <person name="Fujita Y."/>
            <person name="Fuma S."/>
            <person name="Galizzi A."/>
            <person name="Galleron N."/>
            <person name="Ghim S.-Y."/>
            <person name="Glaser P."/>
            <person name="Goffeau A."/>
            <person name="Golightly E.J."/>
            <person name="Grandi G."/>
            <person name="Guiseppi G."/>
            <person name="Guy B.J."/>
            <person name="Haga K."/>
            <person name="Haiech J."/>
            <person name="Harwood C.R."/>
            <person name="Henaut A."/>
            <person name="Hilbert H."/>
            <person name="Holsappel S."/>
            <person name="Hosono S."/>
            <person name="Hullo M.-F."/>
            <person name="Itaya M."/>
            <person name="Jones L.-M."/>
            <person name="Joris B."/>
            <person name="Karamata D."/>
            <person name="Kasahara Y."/>
            <person name="Klaerr-Blanchard M."/>
            <person name="Klein C."/>
            <person name="Kobayashi Y."/>
            <person name="Koetter P."/>
            <person name="Koningstein G."/>
            <person name="Krogh S."/>
            <person name="Kumano M."/>
            <person name="Kurita K."/>
            <person name="Lapidus A."/>
            <person name="Lardinois S."/>
            <person name="Lauber J."/>
            <person name="Lazarevic V."/>
            <person name="Lee S.-M."/>
            <person name="Levine A."/>
            <person name="Liu H."/>
            <person name="Masuda S."/>
            <person name="Mauel C."/>
            <person name="Medigue C."/>
            <person name="Medina N."/>
            <person name="Mellado R.P."/>
            <person name="Mizuno M."/>
            <person name="Moestl D."/>
            <person name="Nakai S."/>
            <person name="Noback M."/>
            <person name="Noone D."/>
            <person name="O'Reilly M."/>
            <person name="Ogawa K."/>
            <person name="Ogiwara A."/>
            <person name="Oudega B."/>
            <person name="Park S.-H."/>
            <person name="Parro V."/>
            <person name="Pohl T.M."/>
            <person name="Portetelle D."/>
            <person name="Porwollik S."/>
            <person name="Prescott A.M."/>
            <person name="Presecan E."/>
            <person name="Pujic P."/>
            <person name="Purnelle B."/>
            <person name="Rapoport G."/>
            <person name="Rey M."/>
            <person name="Reynolds S."/>
            <person name="Rieger M."/>
            <person name="Rivolta C."/>
            <person name="Rocha E."/>
            <person name="Roche B."/>
            <person name="Rose M."/>
            <person name="Sadaie Y."/>
            <person name="Sato T."/>
            <person name="Scanlan E."/>
            <person name="Schleich S."/>
            <person name="Schroeter R."/>
            <person name="Scoffone F."/>
            <person name="Sekiguchi J."/>
            <person name="Sekowska A."/>
            <person name="Seror S.J."/>
            <person name="Serror P."/>
            <person name="Shin B.-S."/>
            <person name="Soldo B."/>
            <person name="Sorokin A."/>
            <person name="Tacconi E."/>
            <person name="Takagi T."/>
            <person name="Takahashi H."/>
            <person name="Takemaru K."/>
            <person name="Takeuchi M."/>
            <person name="Tamakoshi A."/>
            <person name="Tanaka T."/>
            <person name="Terpstra P."/>
            <person name="Tognoni A."/>
            <person name="Tosato V."/>
            <person name="Uchiyama S."/>
            <person name="Vandenbol M."/>
            <person name="Vannier F."/>
            <person name="Vassarotti A."/>
            <person name="Viari A."/>
            <person name="Wambutt R."/>
            <person name="Wedler E."/>
            <person name="Wedler H."/>
            <person name="Weitzenegger T."/>
            <person name="Winters P."/>
            <person name="Wipat A."/>
            <person name="Yamamoto H."/>
            <person name="Yamane K."/>
            <person name="Yasumoto K."/>
            <person name="Yata K."/>
            <person name="Yoshida K."/>
            <person name="Yoshikawa H.-F."/>
            <person name="Zumstein E."/>
            <person name="Yoshikawa H."/>
            <person name="Danchin A."/>
        </authorList>
    </citation>
    <scope>NUCLEOTIDE SEQUENCE [LARGE SCALE GENOMIC DNA]</scope>
    <source>
        <strain>168</strain>
    </source>
</reference>
<organism>
    <name type="scientific">Bacillus subtilis (strain 168)</name>
    <dbReference type="NCBI Taxonomy" id="224308"/>
    <lineage>
        <taxon>Bacteria</taxon>
        <taxon>Bacillati</taxon>
        <taxon>Bacillota</taxon>
        <taxon>Bacilli</taxon>
        <taxon>Bacillales</taxon>
        <taxon>Bacillaceae</taxon>
        <taxon>Bacillus</taxon>
    </lineage>
</organism>
<gene>
    <name type="primary">yfhF</name>
    <name type="ordered locus">BSU08510</name>
</gene>
<protein>
    <recommendedName>
        <fullName>Epimerase family protein YfhF</fullName>
    </recommendedName>
</protein>
<dbReference type="EMBL" id="D85082">
    <property type="protein sequence ID" value="BAA24472.1"/>
    <property type="molecule type" value="Genomic_DNA"/>
</dbReference>
<dbReference type="EMBL" id="AL009126">
    <property type="protein sequence ID" value="CAB12680.1"/>
    <property type="molecule type" value="Genomic_DNA"/>
</dbReference>
<dbReference type="PIR" id="G69800">
    <property type="entry name" value="G69800"/>
</dbReference>
<dbReference type="RefSeq" id="NP_388732.1">
    <property type="nucleotide sequence ID" value="NC_000964.3"/>
</dbReference>
<dbReference type="RefSeq" id="WP_003244332.1">
    <property type="nucleotide sequence ID" value="NZ_OZ025638.1"/>
</dbReference>
<dbReference type="SMR" id="O31574"/>
<dbReference type="FunCoup" id="O31574">
    <property type="interactions" value="376"/>
</dbReference>
<dbReference type="STRING" id="224308.BSU08510"/>
<dbReference type="PaxDb" id="224308-BSU08510"/>
<dbReference type="EnsemblBacteria" id="CAB12680">
    <property type="protein sequence ID" value="CAB12680"/>
    <property type="gene ID" value="BSU_08510"/>
</dbReference>
<dbReference type="GeneID" id="939217"/>
<dbReference type="KEGG" id="bsu:BSU08510"/>
<dbReference type="PATRIC" id="fig|224308.179.peg.918"/>
<dbReference type="eggNOG" id="COG1090">
    <property type="taxonomic scope" value="Bacteria"/>
</dbReference>
<dbReference type="InParanoid" id="O31574"/>
<dbReference type="OrthoDB" id="9801773at2"/>
<dbReference type="PhylomeDB" id="O31574"/>
<dbReference type="BioCyc" id="BSUB:BSU08510-MONOMER"/>
<dbReference type="Proteomes" id="UP000001570">
    <property type="component" value="Chromosome"/>
</dbReference>
<dbReference type="CDD" id="cd05242">
    <property type="entry name" value="SDR_a8"/>
    <property type="match status" value="1"/>
</dbReference>
<dbReference type="Gene3D" id="3.40.50.720">
    <property type="entry name" value="NAD(P)-binding Rossmann-like Domain"/>
    <property type="match status" value="1"/>
</dbReference>
<dbReference type="InterPro" id="IPR013549">
    <property type="entry name" value="DUF1731"/>
</dbReference>
<dbReference type="InterPro" id="IPR001509">
    <property type="entry name" value="Epimerase_deHydtase"/>
</dbReference>
<dbReference type="InterPro" id="IPR036291">
    <property type="entry name" value="NAD(P)-bd_dom_sf"/>
</dbReference>
<dbReference type="InterPro" id="IPR010099">
    <property type="entry name" value="SDR39U1"/>
</dbReference>
<dbReference type="NCBIfam" id="TIGR01777">
    <property type="entry name" value="yfcH"/>
    <property type="match status" value="1"/>
</dbReference>
<dbReference type="PANTHER" id="PTHR11092:SF0">
    <property type="entry name" value="EPIMERASE FAMILY PROTEIN SDR39U1"/>
    <property type="match status" value="1"/>
</dbReference>
<dbReference type="PANTHER" id="PTHR11092">
    <property type="entry name" value="SUGAR NUCLEOTIDE EPIMERASE RELATED"/>
    <property type="match status" value="1"/>
</dbReference>
<dbReference type="Pfam" id="PF08338">
    <property type="entry name" value="DUF1731"/>
    <property type="match status" value="1"/>
</dbReference>
<dbReference type="Pfam" id="PF01370">
    <property type="entry name" value="Epimerase"/>
    <property type="match status" value="1"/>
</dbReference>
<dbReference type="SUPFAM" id="SSF51735">
    <property type="entry name" value="NAD(P)-binding Rossmann-fold domains"/>
    <property type="match status" value="1"/>
</dbReference>
<comment type="similarity">
    <text evidence="1">Belongs to the NAD(P)-dependent epimerase/dehydratase family. SDR39U1 subfamily.</text>
</comment>
<feature type="chain" id="PRO_0000162403" description="Epimerase family protein YfhF">
    <location>
        <begin position="1"/>
        <end position="303"/>
    </location>
</feature>
<evidence type="ECO:0000305" key="1"/>